<dbReference type="EC" id="4.1.1.63"/>
<dbReference type="GO" id="GO:0050223">
    <property type="term" value="F:protocatechuate decarboxylase activity"/>
    <property type="evidence" value="ECO:0007669"/>
    <property type="project" value="UniProtKB-EC"/>
</dbReference>
<organism>
    <name type="scientific">Sedimentibacter hydroxybenzoicus</name>
    <name type="common">Clostridium hydroxybenzoicum</name>
    <dbReference type="NCBI Taxonomy" id="29345"/>
    <lineage>
        <taxon>Bacteria</taxon>
        <taxon>Bacillati</taxon>
        <taxon>Bacillota</taxon>
        <taxon>Tissierellia</taxon>
        <taxon>Sedimentibacter</taxon>
    </lineage>
</organism>
<feature type="chain" id="PRO_0000402826" description="3,4-dihydroxybenzoate decarboxylase">
    <location>
        <begin position="1"/>
        <end position="28" status="greater than"/>
    </location>
</feature>
<feature type="non-terminal residue" evidence="2">
    <location>
        <position position="28"/>
    </location>
</feature>
<sequence length="28" mass="3124">MNKVTDLRSAIELLKTIPGQLIETNXDV</sequence>
<keyword id="KW-0210">Decarboxylase</keyword>
<keyword id="KW-0903">Direct protein sequencing</keyword>
<keyword id="KW-0456">Lyase</keyword>
<reference evidence="3" key="1">
    <citation type="journal article" date="1996" name="J. Bacteriol.">
        <title>Purification and characterization of an oxygen-sensitive, reversible 3,4-dihydroxybenzoate decarboxylase from Clostridium hydroxybenzoicum.</title>
        <authorList>
            <person name="He Z."/>
            <person name="Wiegel J."/>
        </authorList>
    </citation>
    <scope>PROTEIN SEQUENCE</scope>
    <scope>FUNCTION</scope>
    <scope>CATALYTIC ACTIVITY</scope>
    <scope>ACTIVITY REGULATION</scope>
    <scope>BIOPHYSICOCHEMICAL PROPERTIES</scope>
    <scope>SUBUNIT</scope>
    <source>
        <strain>ATCC 51151 / DSM 7310 / JW/Z-1</strain>
    </source>
</reference>
<name>DBD34_SEDHY</name>
<accession>P86833</accession>
<comment type="function">
    <text evidence="1">Reversibly catalyzes the decarboxylation of 3,4-dihydroxybenzoate to catechol. Inactive toward 4-hydroxybenzoate and other benzoate derivatives.</text>
</comment>
<comment type="catalytic activity">
    <reaction evidence="1">
        <text>3,4-dihydroxybenzoate + H(+) = catechol + CO2</text>
        <dbReference type="Rhea" id="RHEA:22416"/>
        <dbReference type="ChEBI" id="CHEBI:15378"/>
        <dbReference type="ChEBI" id="CHEBI:16526"/>
        <dbReference type="ChEBI" id="CHEBI:18135"/>
        <dbReference type="ChEBI" id="CHEBI:36241"/>
        <dbReference type="EC" id="4.1.1.63"/>
    </reaction>
</comment>
<comment type="activity regulation">
    <text evidence="1">Inhibited by oxygen. Completely inhibited by HgCl(2). Partially inhibited by ZnSO(4), 2,3,4-trihydroxybeonzoate and 3,4,5-trihydroxybeonzoate. Unaffected by KCl, MnCl(2) or EDTA. Not stimulated by thiamine phosphate, pyridoxal 5'-phosphate or biotin. Not inhibited by hydroxylamine, NaBH(4) or avidin.</text>
</comment>
<comment type="biophysicochemical properties">
    <kinetics>
        <KM evidence="1">0.6 mM for 3,4-dihydroxybenzoate</KM>
    </kinetics>
    <phDependence>
        <text evidence="1">Optimum pH is 7.0. Stable between pH 6.5 and 9.5.</text>
    </phDependence>
    <temperatureDependence>
        <text evidence="1">Optimum temperature is 50 degrees Celsius. Stable between 11 and 50 degrees Celsius. At 55 degrees Celsius the half life is 1.5 hours.</text>
    </temperatureDependence>
</comment>
<comment type="subunit">
    <text evidence="1">Homopentamer.</text>
</comment>
<protein>
    <recommendedName>
        <fullName evidence="2">3,4-dihydroxybenzoate decarboxylase</fullName>
        <ecNumber>4.1.1.63</ecNumber>
    </recommendedName>
</protein>
<proteinExistence type="evidence at protein level"/>
<evidence type="ECO:0000269" key="1">
    <source>
    </source>
</evidence>
<evidence type="ECO:0000303" key="2">
    <source>
    </source>
</evidence>
<evidence type="ECO:0000305" key="3"/>